<sequence length="653" mass="70415">MALVRGAEPAAGPSRWLPTHVQVTVLRARGLRGKSSGAGSTSDAYTVIQVGREKYSTSVVEKTHGCPEWREECSFELPPGALDGLLRAQEADAGPAPWAASSAAACELVLTTMHRSLIGVDKFLGQATVALDEVFGAGRAQHTQWYKLHSKPGKKEKERGEIEVTIQFTRNNLSASMFDLSMKDKPRSPFSKIRDKMKGKKKYDLESASAILPSSAIEDPDLGSLGKMGKAKGFFLRNKLRKSSLTQSNTSLGSDSTLSSASGSLAYQGPGAELLTRSPSRSSWLSTEGGRDSAQSPKLFTHKRTYSDEANQMRVAPPRALLDLQGHLDAASRSSLCVNGSHIYNEEPQGPVRHRSSISGSLPSSGSLQAVSSRFSEEGPRSTDDTWPRGSRSNSSSEAVLGQEELSAQAKVLAPGASHPGEEEGARLPEGKPVQVATPIVASSEAVAEKEGARKEERKPRMGLFHHHHQGLSRSELGRRSSLGEKGGPILGASPHHSSSGEEKAKSSWFGLREAKDPTQKPSPHPVKPLSAAPVEGSPDRKQSRSSLSIALSSGLEKLKTVTSGSIQPVTQAPQAGQMVDTKRLKDSAVLDQSAKYYHLTHDELISLLLQRERELSQRDEHVQELESYIDRLLVRIMETSPTLLQIPPGPPK</sequence>
<comment type="function">
    <text evidence="7 10">Rab effector involved in protein trafficking from apical recycling endosomes to the apical plasma membrane. Involved in insulin granule exocytosis. May regulate V-ATPase intracellular transport in response to extracellular acidosis.</text>
</comment>
<comment type="subunit">
    <text evidence="6 7 8 9">Interacts with RAB11FIP4 (PubMed:11278501, PubMed:12470645). Interacts with NAPG (PubMed:11278501). Interacts with RO60 (PubMed:10545525). Interacts with RAB11A that has been activated by GTP binding (PubMed:11163216).</text>
</comment>
<comment type="subunit">
    <text evidence="11">(Microbial infection) Interacts with Kaposi's sarcoma-associated herpesvirus/HHV-8 protein ORF45; this interaction results in the lysosomal degradation of ORF45 and the inhibition of viral particle release.</text>
</comment>
<comment type="interaction">
    <interactant intactId="EBI-1387068">
        <id>Q9BXF6</id>
    </interactant>
    <interactant intactId="EBI-1104844">
        <id>Q9Y496</id>
        <label>KIF3A</label>
    </interactant>
    <organismsDiffer>false</organismsDiffer>
    <experiments>2</experiments>
</comment>
<comment type="interaction">
    <interactant intactId="EBI-1387068">
        <id>Q9BXF6</id>
    </interactant>
    <interactant intactId="EBI-745098">
        <id>P62491</id>
        <label>RAB11A</label>
    </interactant>
    <organismsDiffer>false</organismsDiffer>
    <experiments>7</experiments>
</comment>
<comment type="interaction">
    <interactant intactId="EBI-1387068">
        <id>Q9BXF6</id>
    </interactant>
    <interactant intactId="EBI-298169">
        <id>Q96RF0</id>
        <label>SNX18</label>
    </interactant>
    <organismsDiffer>false</organismsDiffer>
    <experiments>3</experiments>
</comment>
<comment type="subcellular location">
    <subcellularLocation>
        <location>Cytoplasm</location>
    </subcellularLocation>
    <subcellularLocation>
        <location>Recycling endosome membrane</location>
        <topology>Peripheral membrane protein</topology>
    </subcellularLocation>
    <subcellularLocation>
        <location evidence="1">Early endosome membrane</location>
        <topology evidence="1">Peripheral membrane protein</topology>
    </subcellularLocation>
    <subcellularLocation>
        <location evidence="1">Golgi apparatus membrane</location>
        <topology evidence="1">Peripheral membrane protein</topology>
    </subcellularLocation>
    <subcellularLocation>
        <location evidence="1">Cytoplasmic vesicle</location>
        <location evidence="1">Secretory vesicle membrane</location>
        <topology evidence="1">Peripheral membrane protein</topology>
    </subcellularLocation>
    <subcellularLocation>
        <location>Mitochondrion membrane</location>
        <topology>Peripheral membrane protein</topology>
    </subcellularLocation>
</comment>
<comment type="tissue specificity">
    <text evidence="6 8">Detected at low levels in heart, brain, placenta, lung, liver, adipocytes, kidney, spleen, skeletal muscle and pancreas.</text>
</comment>
<comment type="domain">
    <text>Binds to vesicles enriched in neutral phospholipids via its C2 domain. The interaction is favored by Mg(2+) rather than Ca(2+).</text>
</comment>
<comment type="PTM">
    <text evidence="6">Phosphorylated on serine and threonine residues. Phosphorylation at Ser-357 is PKA-dependent.</text>
</comment>
<comment type="miscellaneous">
    <text>Antibodies against RIP11 are found in sera from patients with autoimmune diseases such as systemic lupus erythematosus (SLE) or Sjoegren syndrome (SS). It is also found in the sera from mothers of children with neonatal lupus erythematosus (NLE).</text>
</comment>
<comment type="sequence caution" evidence="15">
    <conflict type="erroneous initiation">
        <sequence resource="EMBL-CDS" id="BAA74880"/>
    </conflict>
</comment>
<dbReference type="EMBL" id="AF334812">
    <property type="protein sequence ID" value="AAK20892.1"/>
    <property type="molecule type" value="mRNA"/>
</dbReference>
<dbReference type="EMBL" id="AB020664">
    <property type="protein sequence ID" value="BAA74880.1"/>
    <property type="status" value="ALT_INIT"/>
    <property type="molecule type" value="mRNA"/>
</dbReference>
<dbReference type="EMBL" id="BC035013">
    <property type="protein sequence ID" value="AAH35013.1"/>
    <property type="molecule type" value="mRNA"/>
</dbReference>
<dbReference type="EMBL" id="AF153085">
    <property type="protein sequence ID" value="AAF34356.1"/>
    <property type="molecule type" value="mRNA"/>
</dbReference>
<dbReference type="CCDS" id="CCDS1923.1"/>
<dbReference type="PIR" id="T17312">
    <property type="entry name" value="T17312"/>
</dbReference>
<dbReference type="RefSeq" id="NP_056285.1">
    <property type="nucleotide sequence ID" value="NM_015470.3"/>
</dbReference>
<dbReference type="SMR" id="Q9BXF6"/>
<dbReference type="BioGRID" id="117518">
    <property type="interactions" value="188"/>
</dbReference>
<dbReference type="CORUM" id="Q9BXF6"/>
<dbReference type="FunCoup" id="Q9BXF6">
    <property type="interactions" value="1585"/>
</dbReference>
<dbReference type="IntAct" id="Q9BXF6">
    <property type="interactions" value="80"/>
</dbReference>
<dbReference type="MINT" id="Q9BXF6"/>
<dbReference type="STRING" id="9606.ENSP00000258098"/>
<dbReference type="GlyGen" id="Q9BXF6">
    <property type="glycosylation" value="1 site, 1 O-linked glycan (1 site)"/>
</dbReference>
<dbReference type="iPTMnet" id="Q9BXF6"/>
<dbReference type="PhosphoSitePlus" id="Q9BXF6"/>
<dbReference type="BioMuta" id="RAB11FIP5"/>
<dbReference type="DMDM" id="34223002"/>
<dbReference type="jPOST" id="Q9BXF6"/>
<dbReference type="MassIVE" id="Q9BXF6"/>
<dbReference type="PaxDb" id="9606-ENSP00000258098"/>
<dbReference type="PeptideAtlas" id="Q9BXF6"/>
<dbReference type="ProteomicsDB" id="79420"/>
<dbReference type="Pumba" id="Q9BXF6"/>
<dbReference type="Antibodypedia" id="31309">
    <property type="antibodies" value="123 antibodies from 26 providers"/>
</dbReference>
<dbReference type="DNASU" id="26056"/>
<dbReference type="Ensembl" id="ENST00000258098.6">
    <property type="protein sequence ID" value="ENSP00000258098.6"/>
    <property type="gene ID" value="ENSG00000135631.17"/>
</dbReference>
<dbReference type="GeneID" id="26056"/>
<dbReference type="KEGG" id="hsa:26056"/>
<dbReference type="UCSC" id="uc002siu.4">
    <property type="organism name" value="human"/>
</dbReference>
<dbReference type="AGR" id="HGNC:24845"/>
<dbReference type="CTD" id="26056"/>
<dbReference type="DisGeNET" id="26056"/>
<dbReference type="GeneCards" id="RAB11FIP5"/>
<dbReference type="HGNC" id="HGNC:24845">
    <property type="gene designation" value="RAB11FIP5"/>
</dbReference>
<dbReference type="HPA" id="ENSG00000135631">
    <property type="expression patterns" value="Tissue enhanced (testis)"/>
</dbReference>
<dbReference type="MalaCards" id="RAB11FIP5"/>
<dbReference type="MIM" id="605536">
    <property type="type" value="gene"/>
</dbReference>
<dbReference type="neXtProt" id="NX_Q9BXF6"/>
<dbReference type="OpenTargets" id="ENSG00000135631"/>
<dbReference type="PharmGKB" id="PA134971129"/>
<dbReference type="VEuPathDB" id="HostDB:ENSG00000135631"/>
<dbReference type="eggNOG" id="ENOG502QQKU">
    <property type="taxonomic scope" value="Eukaryota"/>
</dbReference>
<dbReference type="GeneTree" id="ENSGT00940000158783"/>
<dbReference type="HOGENOM" id="CLU_015242_2_0_1"/>
<dbReference type="InParanoid" id="Q9BXF6"/>
<dbReference type="OrthoDB" id="8956628at2759"/>
<dbReference type="PAN-GO" id="Q9BXF6">
    <property type="GO annotations" value="6 GO annotations based on evolutionary models"/>
</dbReference>
<dbReference type="PhylomeDB" id="Q9BXF6"/>
<dbReference type="TreeFam" id="TF326172"/>
<dbReference type="PathwayCommons" id="Q9BXF6"/>
<dbReference type="SignaLink" id="Q9BXF6"/>
<dbReference type="SIGNOR" id="Q9BXF6"/>
<dbReference type="BioGRID-ORCS" id="26056">
    <property type="hits" value="13 hits in 1151 CRISPR screens"/>
</dbReference>
<dbReference type="CD-CODE" id="FB4E32DD">
    <property type="entry name" value="Presynaptic clusters and postsynaptic densities"/>
</dbReference>
<dbReference type="ChiTaRS" id="RAB11FIP5">
    <property type="organism name" value="human"/>
</dbReference>
<dbReference type="GeneWiki" id="RAB11FIP5"/>
<dbReference type="GenomeRNAi" id="26056"/>
<dbReference type="Pharos" id="Q9BXF6">
    <property type="development level" value="Tbio"/>
</dbReference>
<dbReference type="PRO" id="PR:Q9BXF6"/>
<dbReference type="Proteomes" id="UP000005640">
    <property type="component" value="Chromosome 2"/>
</dbReference>
<dbReference type="RNAct" id="Q9BXF6">
    <property type="molecule type" value="protein"/>
</dbReference>
<dbReference type="Bgee" id="ENSG00000135631">
    <property type="expression patterns" value="Expressed in sperm and 207 other cell types or tissues"/>
</dbReference>
<dbReference type="ExpressionAtlas" id="Q9BXF6">
    <property type="expression patterns" value="baseline and differential"/>
</dbReference>
<dbReference type="GO" id="GO:0034451">
    <property type="term" value="C:centriolar satellite"/>
    <property type="evidence" value="ECO:0000314"/>
    <property type="project" value="HPA"/>
</dbReference>
<dbReference type="GO" id="GO:0036064">
    <property type="term" value="C:ciliary basal body"/>
    <property type="evidence" value="ECO:0000314"/>
    <property type="project" value="HPA"/>
</dbReference>
<dbReference type="GO" id="GO:0005929">
    <property type="term" value="C:cilium"/>
    <property type="evidence" value="ECO:0000314"/>
    <property type="project" value="HPA"/>
</dbReference>
<dbReference type="GO" id="GO:0005769">
    <property type="term" value="C:early endosome"/>
    <property type="evidence" value="ECO:0000250"/>
    <property type="project" value="UniProtKB"/>
</dbReference>
<dbReference type="GO" id="GO:0031901">
    <property type="term" value="C:early endosome membrane"/>
    <property type="evidence" value="ECO:0007669"/>
    <property type="project" value="UniProtKB-SubCell"/>
</dbReference>
<dbReference type="GO" id="GO:0005794">
    <property type="term" value="C:Golgi apparatus"/>
    <property type="evidence" value="ECO:0000250"/>
    <property type="project" value="UniProtKB"/>
</dbReference>
<dbReference type="GO" id="GO:0000139">
    <property type="term" value="C:Golgi membrane"/>
    <property type="evidence" value="ECO:0007669"/>
    <property type="project" value="UniProtKB-SubCell"/>
</dbReference>
<dbReference type="GO" id="GO:0043231">
    <property type="term" value="C:intracellular membrane-bounded organelle"/>
    <property type="evidence" value="ECO:0000314"/>
    <property type="project" value="HPA"/>
</dbReference>
<dbReference type="GO" id="GO:0005741">
    <property type="term" value="C:mitochondrial outer membrane"/>
    <property type="evidence" value="ECO:0000314"/>
    <property type="project" value="UniProtKB"/>
</dbReference>
<dbReference type="GO" id="GO:0005739">
    <property type="term" value="C:mitochondrion"/>
    <property type="evidence" value="ECO:0000318"/>
    <property type="project" value="GO_Central"/>
</dbReference>
<dbReference type="GO" id="GO:0016607">
    <property type="term" value="C:nuclear speck"/>
    <property type="evidence" value="ECO:0000314"/>
    <property type="project" value="HPA"/>
</dbReference>
<dbReference type="GO" id="GO:0045335">
    <property type="term" value="C:phagocytic vesicle"/>
    <property type="evidence" value="ECO:0000318"/>
    <property type="project" value="GO_Central"/>
</dbReference>
<dbReference type="GO" id="GO:0005886">
    <property type="term" value="C:plasma membrane"/>
    <property type="evidence" value="ECO:0000314"/>
    <property type="project" value="HPA"/>
</dbReference>
<dbReference type="GO" id="GO:0055037">
    <property type="term" value="C:recycling endosome"/>
    <property type="evidence" value="ECO:0000250"/>
    <property type="project" value="UniProtKB"/>
</dbReference>
<dbReference type="GO" id="GO:0055038">
    <property type="term" value="C:recycling endosome membrane"/>
    <property type="evidence" value="ECO:0007669"/>
    <property type="project" value="UniProtKB-SubCell"/>
</dbReference>
<dbReference type="GO" id="GO:0030141">
    <property type="term" value="C:secretory granule"/>
    <property type="evidence" value="ECO:0000250"/>
    <property type="project" value="UniProtKB"/>
</dbReference>
<dbReference type="GO" id="GO:0030658">
    <property type="term" value="C:transport vesicle membrane"/>
    <property type="evidence" value="ECO:0007669"/>
    <property type="project" value="UniProtKB-SubCell"/>
</dbReference>
<dbReference type="GO" id="GO:0043015">
    <property type="term" value="F:gamma-tubulin binding"/>
    <property type="evidence" value="ECO:0000314"/>
    <property type="project" value="UniProtKB"/>
</dbReference>
<dbReference type="GO" id="GO:0031267">
    <property type="term" value="F:small GTPase binding"/>
    <property type="evidence" value="ECO:0007669"/>
    <property type="project" value="InterPro"/>
</dbReference>
<dbReference type="GO" id="GO:0071468">
    <property type="term" value="P:cellular response to acidic pH"/>
    <property type="evidence" value="ECO:0000314"/>
    <property type="project" value="UniProtKB"/>
</dbReference>
<dbReference type="GO" id="GO:0035773">
    <property type="term" value="P:insulin secretion involved in cellular response to glucose stimulus"/>
    <property type="evidence" value="ECO:0000250"/>
    <property type="project" value="UniProtKB"/>
</dbReference>
<dbReference type="GO" id="GO:0070164">
    <property type="term" value="P:negative regulation of adiponectin secretion"/>
    <property type="evidence" value="ECO:0000314"/>
    <property type="project" value="CACAO"/>
</dbReference>
<dbReference type="GO" id="GO:0045055">
    <property type="term" value="P:regulated exocytosis"/>
    <property type="evidence" value="ECO:0000250"/>
    <property type="project" value="UniProtKB"/>
</dbReference>
<dbReference type="GO" id="GO:2000008">
    <property type="term" value="P:regulation of protein localization to cell surface"/>
    <property type="evidence" value="ECO:0000315"/>
    <property type="project" value="UniProtKB"/>
</dbReference>
<dbReference type="FunFam" id="2.60.40.150:FF:000077">
    <property type="entry name" value="rab11 family-interacting protein 1 isoform X1"/>
    <property type="match status" value="1"/>
</dbReference>
<dbReference type="FunFam" id="1.20.5.2440:FF:000004">
    <property type="entry name" value="rab11 family-interacting protein 5 isoform X2"/>
    <property type="match status" value="1"/>
</dbReference>
<dbReference type="Gene3D" id="1.20.5.2440">
    <property type="match status" value="1"/>
</dbReference>
<dbReference type="Gene3D" id="2.60.40.150">
    <property type="entry name" value="C2 domain"/>
    <property type="match status" value="1"/>
</dbReference>
<dbReference type="InterPro" id="IPR000008">
    <property type="entry name" value="C2_dom"/>
</dbReference>
<dbReference type="InterPro" id="IPR035892">
    <property type="entry name" value="C2_domain_sf"/>
</dbReference>
<dbReference type="InterPro" id="IPR037245">
    <property type="entry name" value="FIP-RBD_C_sf"/>
</dbReference>
<dbReference type="InterPro" id="IPR037789">
    <property type="entry name" value="FIP_classI"/>
</dbReference>
<dbReference type="InterPro" id="IPR019018">
    <property type="entry name" value="Rab-bd_FIP-RBD"/>
</dbReference>
<dbReference type="PANTHER" id="PTHR15746:SF14">
    <property type="entry name" value="RAB11 FAMILY-INTERACTING PROTEIN 5"/>
    <property type="match status" value="1"/>
</dbReference>
<dbReference type="PANTHER" id="PTHR15746">
    <property type="entry name" value="RAB11-RELATED"/>
    <property type="match status" value="1"/>
</dbReference>
<dbReference type="Pfam" id="PF00168">
    <property type="entry name" value="C2"/>
    <property type="match status" value="2"/>
</dbReference>
<dbReference type="Pfam" id="PF09457">
    <property type="entry name" value="RBD-FIP"/>
    <property type="match status" value="1"/>
</dbReference>
<dbReference type="SMART" id="SM00239">
    <property type="entry name" value="C2"/>
    <property type="match status" value="1"/>
</dbReference>
<dbReference type="SUPFAM" id="SSF49562">
    <property type="entry name" value="C2 domain (Calcium/lipid-binding domain, CaLB)"/>
    <property type="match status" value="1"/>
</dbReference>
<dbReference type="SUPFAM" id="SSF144270">
    <property type="entry name" value="Eferin C-derminal domain-like"/>
    <property type="match status" value="1"/>
</dbReference>
<dbReference type="PROSITE" id="PS50004">
    <property type="entry name" value="C2"/>
    <property type="match status" value="1"/>
</dbReference>
<dbReference type="PROSITE" id="PS51511">
    <property type="entry name" value="FIP_RBD"/>
    <property type="match status" value="1"/>
</dbReference>
<protein>
    <recommendedName>
        <fullName evidence="16">Rab11 family-interacting protein 5</fullName>
        <shortName evidence="14">Rab11-FIP5</shortName>
    </recommendedName>
    <alternativeName>
        <fullName evidence="16">Gamma-SNAP-associated factor 1</fullName>
        <shortName evidence="13">Gaf-1</shortName>
    </alternativeName>
    <alternativeName>
        <fullName evidence="16">Phosphoprotein pp75</fullName>
    </alternativeName>
    <alternativeName>
        <fullName evidence="12">Rab11-interacting protein Rip11</fullName>
    </alternativeName>
</protein>
<gene>
    <name evidence="16" type="primary">RAB11FIP5</name>
    <name evidence="16" type="synonym">GAF1</name>
    <name evidence="16" type="synonym">KIAA0857</name>
    <name evidence="16" type="synonym">RIP11</name>
</gene>
<feature type="chain" id="PRO_0000097307" description="Rab11 family-interacting protein 5">
    <location>
        <begin position="1"/>
        <end position="653"/>
    </location>
</feature>
<feature type="domain" description="C2" evidence="3">
    <location>
        <begin position="5"/>
        <end position="146"/>
    </location>
</feature>
<feature type="domain" description="FIP-RBD" evidence="4">
    <location>
        <begin position="586"/>
        <end position="648"/>
    </location>
</feature>
<feature type="region of interest" description="Disordered" evidence="5">
    <location>
        <begin position="269"/>
        <end position="300"/>
    </location>
</feature>
<feature type="region of interest" description="Disordered" evidence="5">
    <location>
        <begin position="342"/>
        <end position="402"/>
    </location>
</feature>
<feature type="region of interest" description="Disordered" evidence="5">
    <location>
        <begin position="415"/>
        <end position="548"/>
    </location>
</feature>
<feature type="compositionally biased region" description="Polar residues" evidence="5">
    <location>
        <begin position="277"/>
        <end position="286"/>
    </location>
</feature>
<feature type="compositionally biased region" description="Low complexity" evidence="5">
    <location>
        <begin position="357"/>
        <end position="368"/>
    </location>
</feature>
<feature type="compositionally biased region" description="Basic and acidic residues" evidence="5">
    <location>
        <begin position="375"/>
        <end position="387"/>
    </location>
</feature>
<feature type="compositionally biased region" description="Basic and acidic residues" evidence="5">
    <location>
        <begin position="420"/>
        <end position="430"/>
    </location>
</feature>
<feature type="compositionally biased region" description="Basic and acidic residues" evidence="5">
    <location>
        <begin position="447"/>
        <end position="460"/>
    </location>
</feature>
<feature type="modified residue" description="Phosphoserine" evidence="18">
    <location>
        <position position="176"/>
    </location>
</feature>
<feature type="modified residue" description="Phosphoserine" evidence="2">
    <location>
        <position position="283"/>
    </location>
</feature>
<feature type="modified residue" description="Phosphoserine" evidence="19">
    <location>
        <position position="286"/>
    </location>
</feature>
<feature type="modified residue" description="Phosphoserine" evidence="17 18 19">
    <location>
        <position position="307"/>
    </location>
</feature>
<feature type="modified residue" description="Phosphoserine" evidence="19">
    <location>
        <position position="357"/>
    </location>
</feature>
<feature type="modified residue" description="Phosphoserine" evidence="19">
    <location>
        <position position="367"/>
    </location>
</feature>
<feature type="modified residue" description="Phosphoserine" evidence="19">
    <location>
        <position position="391"/>
    </location>
</feature>
<feature type="modified residue" description="Phosphoserine" evidence="19">
    <location>
        <position position="395"/>
    </location>
</feature>
<feature type="modified residue" description="Phosphoserine" evidence="18 19">
    <location>
        <position position="494"/>
    </location>
</feature>
<feature type="modified residue" description="Phosphoserine" evidence="17 18">
    <location>
        <position position="538"/>
    </location>
</feature>
<feature type="modified residue" description="Phosphoserine" evidence="2">
    <location>
        <position position="547"/>
    </location>
</feature>
<feature type="modified residue" description="Phosphoserine" evidence="2">
    <location>
        <position position="553"/>
    </location>
</feature>
<feature type="sequence conflict" description="In Ref. 3; AAH35013." evidence="15" ref="3">
    <location>
        <position position="176"/>
    </location>
</feature>
<feature type="sequence conflict" description="In Ref. 3; AAH35013." evidence="15" ref="3">
    <original>E</original>
    <variation>G</variation>
    <location>
        <position position="503"/>
    </location>
</feature>
<feature type="sequence conflict" description="In Ref. 3; AAH35013." evidence="15" ref="3">
    <original>H</original>
    <variation>N</variation>
    <location>
        <position position="599"/>
    </location>
</feature>
<accession>Q9BXF6</accession>
<accession>O94939</accession>
<accession>Q9P0M1</accession>
<proteinExistence type="evidence at protein level"/>
<name>RFIP5_HUMAN</name>
<evidence type="ECO:0000250" key="1"/>
<evidence type="ECO:0000250" key="2">
    <source>
        <dbReference type="UniProtKB" id="Q8R361"/>
    </source>
</evidence>
<evidence type="ECO:0000255" key="3">
    <source>
        <dbReference type="PROSITE-ProRule" id="PRU00041"/>
    </source>
</evidence>
<evidence type="ECO:0000255" key="4">
    <source>
        <dbReference type="PROSITE-ProRule" id="PRU00844"/>
    </source>
</evidence>
<evidence type="ECO:0000256" key="5">
    <source>
        <dbReference type="SAM" id="MobiDB-lite"/>
    </source>
</evidence>
<evidence type="ECO:0000269" key="6">
    <source>
    </source>
</evidence>
<evidence type="ECO:0000269" key="7">
    <source>
    </source>
</evidence>
<evidence type="ECO:0000269" key="8">
    <source>
    </source>
</evidence>
<evidence type="ECO:0000269" key="9">
    <source>
    </source>
</evidence>
<evidence type="ECO:0000269" key="10">
    <source>
    </source>
</evidence>
<evidence type="ECO:0000269" key="11">
    <source>
    </source>
</evidence>
<evidence type="ECO:0000303" key="12">
    <source>
    </source>
</evidence>
<evidence type="ECO:0000303" key="13">
    <source>
    </source>
</evidence>
<evidence type="ECO:0000303" key="14">
    <source>
    </source>
</evidence>
<evidence type="ECO:0000305" key="15"/>
<evidence type="ECO:0000312" key="16">
    <source>
        <dbReference type="HGNC" id="HGNC:24845"/>
    </source>
</evidence>
<evidence type="ECO:0007744" key="17">
    <source>
    </source>
</evidence>
<evidence type="ECO:0007744" key="18">
    <source>
    </source>
</evidence>
<evidence type="ECO:0007744" key="19">
    <source>
    </source>
</evidence>
<keyword id="KW-0963">Cytoplasm</keyword>
<keyword id="KW-0968">Cytoplasmic vesicle</keyword>
<keyword id="KW-0967">Endosome</keyword>
<keyword id="KW-0333">Golgi apparatus</keyword>
<keyword id="KW-0945">Host-virus interaction</keyword>
<keyword id="KW-0472">Membrane</keyword>
<keyword id="KW-0496">Mitochondrion</keyword>
<keyword id="KW-0597">Phosphoprotein</keyword>
<keyword id="KW-0653">Protein transport</keyword>
<keyword id="KW-1267">Proteomics identification</keyword>
<keyword id="KW-1185">Reference proteome</keyword>
<keyword id="KW-0813">Transport</keyword>
<organism>
    <name type="scientific">Homo sapiens</name>
    <name type="common">Human</name>
    <dbReference type="NCBI Taxonomy" id="9606"/>
    <lineage>
        <taxon>Eukaryota</taxon>
        <taxon>Metazoa</taxon>
        <taxon>Chordata</taxon>
        <taxon>Craniata</taxon>
        <taxon>Vertebrata</taxon>
        <taxon>Euteleostomi</taxon>
        <taxon>Mammalia</taxon>
        <taxon>Eutheria</taxon>
        <taxon>Euarchontoglires</taxon>
        <taxon>Primates</taxon>
        <taxon>Haplorrhini</taxon>
        <taxon>Catarrhini</taxon>
        <taxon>Hominidae</taxon>
        <taxon>Homo</taxon>
    </lineage>
</organism>
<reference key="1">
    <citation type="journal article" date="2000" name="Mol. Cell">
        <title>A Rab11/Rip11 protein complex regulates apical membrane trafficking via recycling endosomes.</title>
        <authorList>
            <person name="Prekeris R."/>
            <person name="Klumperman J."/>
            <person name="Scheller R.H."/>
        </authorList>
    </citation>
    <scope>NUCLEOTIDE SEQUENCE [MRNA]</scope>
    <scope>FUNCTION</scope>
    <scope>INTERACTION WITH RAB11A</scope>
    <scope>SUBCELLULAR LOCATION</scope>
</reference>
<reference key="2">
    <citation type="journal article" date="1998" name="DNA Res.">
        <title>Prediction of the coding sequences of unidentified human genes. XII. The complete sequences of 100 new cDNA clones from brain which code for large proteins in vitro.</title>
        <authorList>
            <person name="Nagase T."/>
            <person name="Ishikawa K."/>
            <person name="Suyama M."/>
            <person name="Kikuno R."/>
            <person name="Hirosawa M."/>
            <person name="Miyajima N."/>
            <person name="Tanaka A."/>
            <person name="Kotani H."/>
            <person name="Nomura N."/>
            <person name="Ohara O."/>
        </authorList>
    </citation>
    <scope>NUCLEOTIDE SEQUENCE [LARGE SCALE MRNA]</scope>
    <source>
        <tissue>Brain</tissue>
    </source>
</reference>
<reference key="3">
    <citation type="journal article" date="2004" name="Genome Res.">
        <title>The status, quality, and expansion of the NIH full-length cDNA project: the Mammalian Gene Collection (MGC).</title>
        <authorList>
            <consortium name="The MGC Project Team"/>
        </authorList>
    </citation>
    <scope>NUCLEOTIDE SEQUENCE [LARGE SCALE MRNA]</scope>
    <source>
        <tissue>Testis</tissue>
    </source>
</reference>
<reference key="4">
    <citation type="journal article" date="1999" name="J. Clin. Invest.">
        <title>Defining a novel 75-kDa phosphoprotein associated with SS-A/Ro and identification of distinct human autoantibodies.</title>
        <authorList>
            <person name="Wang D."/>
            <person name="Buyon J.P."/>
            <person name="Zhu W."/>
            <person name="Chan E.K.L."/>
        </authorList>
    </citation>
    <scope>NUCLEOTIDE SEQUENCE [MRNA] OF 105-653</scope>
    <scope>INTERACTION WITH RO60</scope>
    <scope>IDENTIFICATION AS ANTIGEN IN AUTOIMMUNE DISEASES</scope>
    <scope>TISSUE SPECIFICITY</scope>
    <scope>PHOSPHORYLATION</scope>
    <source>
        <tissue>Keratinocyte</tissue>
    </source>
</reference>
<reference key="5">
    <citation type="journal article" date="2001" name="J. Biol. Chem.">
        <title>Gaf-1, a gamma-SNAP-binding protein associated with the mitochondria.</title>
        <authorList>
            <person name="Chen D."/>
            <person name="Xu W."/>
            <person name="He P."/>
            <person name="Medrano E.E."/>
            <person name="Whiteheart S.W."/>
        </authorList>
    </citation>
    <scope>INTERACTION WITH NAPG</scope>
    <scope>TISSUE SPECIFICITY</scope>
    <scope>SUBCELLULAR LOCATION</scope>
</reference>
<reference key="6">
    <citation type="journal article" date="2002" name="Biochem. Biophys. Res. Commun.">
        <title>Rab11-FIP4 interacts with Rab11 in a GTP-dependent manner and its overexpression condenses the Rab11 positive compartment in HeLa cells.</title>
        <authorList>
            <person name="Wallace D.M."/>
            <person name="Lindsay A.J."/>
            <person name="Hendrick A.G."/>
            <person name="McCaffrey M.W."/>
        </authorList>
    </citation>
    <scope>INTERACTION WITH RAB11FIP4</scope>
</reference>
<reference key="7">
    <citation type="journal article" date="2006" name="Cell">
        <title>Global, in vivo, and site-specific phosphorylation dynamics in signaling networks.</title>
        <authorList>
            <person name="Olsen J.V."/>
            <person name="Blagoev B."/>
            <person name="Gnad F."/>
            <person name="Macek B."/>
            <person name="Kumar C."/>
            <person name="Mortensen P."/>
            <person name="Mann M."/>
        </authorList>
    </citation>
    <scope>IDENTIFICATION BY MASS SPECTROMETRY [LARGE SCALE ANALYSIS]</scope>
    <source>
        <tissue>Cervix carcinoma</tissue>
    </source>
</reference>
<reference key="8">
    <citation type="journal article" date="2008" name="Proc. Natl. Acad. Sci. U.S.A.">
        <title>A quantitative atlas of mitotic phosphorylation.</title>
        <authorList>
            <person name="Dephoure N."/>
            <person name="Zhou C."/>
            <person name="Villen J."/>
            <person name="Beausoleil S.A."/>
            <person name="Bakalarski C.E."/>
            <person name="Elledge S.J."/>
            <person name="Gygi S.P."/>
        </authorList>
    </citation>
    <scope>PHOSPHORYLATION [LARGE SCALE ANALYSIS] AT SER-307 AND SER-538</scope>
    <scope>IDENTIFICATION BY MASS SPECTROMETRY [LARGE SCALE ANALYSIS]</scope>
    <source>
        <tissue>Cervix carcinoma</tissue>
    </source>
</reference>
<reference key="9">
    <citation type="journal article" date="2009" name="Anal. Chem.">
        <title>Lys-N and trypsin cover complementary parts of the phosphoproteome in a refined SCX-based approach.</title>
        <authorList>
            <person name="Gauci S."/>
            <person name="Helbig A.O."/>
            <person name="Slijper M."/>
            <person name="Krijgsveld J."/>
            <person name="Heck A.J."/>
            <person name="Mohammed S."/>
        </authorList>
    </citation>
    <scope>IDENTIFICATION BY MASS SPECTROMETRY [LARGE SCALE ANALYSIS]</scope>
</reference>
<reference key="10">
    <citation type="journal article" date="2009" name="Sci. Signal.">
        <title>Quantitative phosphoproteomic analysis of T cell receptor signaling reveals system-wide modulation of protein-protein interactions.</title>
        <authorList>
            <person name="Mayya V."/>
            <person name="Lundgren D.H."/>
            <person name="Hwang S.-I."/>
            <person name="Rezaul K."/>
            <person name="Wu L."/>
            <person name="Eng J.K."/>
            <person name="Rodionov V."/>
            <person name="Han D.K."/>
        </authorList>
    </citation>
    <scope>IDENTIFICATION BY MASS SPECTROMETRY [LARGE SCALE ANALYSIS]</scope>
    <source>
        <tissue>Leukemic T-cell</tissue>
    </source>
</reference>
<reference key="11">
    <citation type="journal article" date="2010" name="Sci. Signal.">
        <title>Quantitative phosphoproteomics reveals widespread full phosphorylation site occupancy during mitosis.</title>
        <authorList>
            <person name="Olsen J.V."/>
            <person name="Vermeulen M."/>
            <person name="Santamaria A."/>
            <person name="Kumar C."/>
            <person name="Miller M.L."/>
            <person name="Jensen L.J."/>
            <person name="Gnad F."/>
            <person name="Cox J."/>
            <person name="Jensen T.S."/>
            <person name="Nigg E.A."/>
            <person name="Brunak S."/>
            <person name="Mann M."/>
        </authorList>
    </citation>
    <scope>PHOSPHORYLATION [LARGE SCALE ANALYSIS] AT SER-176; SER-307; SER-494 AND SER-538</scope>
    <scope>IDENTIFICATION BY MASS SPECTROMETRY [LARGE SCALE ANALYSIS]</scope>
    <source>
        <tissue>Cervix carcinoma</tissue>
    </source>
</reference>
<reference key="12">
    <citation type="journal article" date="2011" name="J. Cell. Physiol.">
        <title>Rab11b and its effector Rip11 regulate the acidosis-induced traffic of V-ATPase in salivary ducts.</title>
        <authorList>
            <person name="Oehlke O."/>
            <person name="Martin H.W."/>
            <person name="Osterberg N."/>
            <person name="Roussa E."/>
        </authorList>
    </citation>
    <scope>FUNCTION</scope>
</reference>
<reference key="13">
    <citation type="journal article" date="2013" name="J. Proteome Res.">
        <title>Toward a comprehensive characterization of a human cancer cell phosphoproteome.</title>
        <authorList>
            <person name="Zhou H."/>
            <person name="Di Palma S."/>
            <person name="Preisinger C."/>
            <person name="Peng M."/>
            <person name="Polat A.N."/>
            <person name="Heck A.J."/>
            <person name="Mohammed S."/>
        </authorList>
    </citation>
    <scope>PHOSPHORYLATION [LARGE SCALE ANALYSIS] AT SER-286; SER-307; SER-357; SER-367; SER-391; SER-395 AND SER-494</scope>
    <scope>IDENTIFICATION BY MASS SPECTROMETRY [LARGE SCALE ANALYSIS]</scope>
    <source>
        <tissue>Cervix carcinoma</tissue>
        <tissue>Erythroleukemia</tissue>
    </source>
</reference>
<reference key="14">
    <citation type="journal article" date="2014" name="J. Proteomics">
        <title>An enzyme assisted RP-RPLC approach for in-depth analysis of human liver phosphoproteome.</title>
        <authorList>
            <person name="Bian Y."/>
            <person name="Song C."/>
            <person name="Cheng K."/>
            <person name="Dong M."/>
            <person name="Wang F."/>
            <person name="Huang J."/>
            <person name="Sun D."/>
            <person name="Wang L."/>
            <person name="Ye M."/>
            <person name="Zou H."/>
        </authorList>
    </citation>
    <scope>IDENTIFICATION BY MASS SPECTROMETRY [LARGE SCALE ANALYSIS]</scope>
    <source>
        <tissue>Liver</tissue>
    </source>
</reference>
<reference key="15">
    <citation type="journal article" date="2020" name="PLoS Pathog.">
        <title>Host RAB11FIP5 protein inhibits the release of Kaposi's sarcoma-associated herpesvirus particles by promoting lysosomal degradation of ORF45.</title>
        <authorList>
            <person name="Wei X."/>
            <person name="Dong J."/>
            <person name="Cheng C.C."/>
            <person name="Ji M."/>
            <person name="Yu L."/>
            <person name="Luo S."/>
            <person name="Wu S."/>
            <person name="Bai L."/>
            <person name="Lan K."/>
        </authorList>
    </citation>
    <scope>INTERACTION WITH KAPOSI'S SARCOMA-ASSOCIATED HERPESVIRUS/HHV-8 PROTEIN ORF45 (MICROBIAL INFECTION)</scope>
</reference>